<accession>Q5HVM3</accession>
<sequence>MMRFTKFYAPSLKEAPKDASLPSHIFLTRAGFVEQIGSGLYNFLPLGKRVLDKIKNIVKEEMDKAGAQEVNLSFITPASLWQESGRYNVFGKELLRFKDRKENEFVLGPTHEEAMLSLVKNKITSYKQLPLHLYQIGLKFRDEARPRFGLLRCREFLMKDGYSFHANEEDLGREFELMYKTYSQILQRMGLDFRAVEADSGAIGGSGSKEFMVLAKNGEDDILICENCDYAANVEAAKRAKKTCQDERPEANYASKFHTPNIKTIDSLAQFFKINAFYTIKAVVKKAIYENESKLVVFFIRGSDDLQEVKAQNACSALELVDASEEELEKAGLVAGFIGFVGLKDIDFYIDFELENEKQMIMGANEKDYHLIGIDVVNLNKDRFKDLIEVKEGDCCVKCGAKLKQSKGIEVGHIFKLGQKYSKAMNANFLDENGKSQPFYMGCYGIGVSRLLAVATEASHDEKGCIWNKTLAPFVLEIIVSNLKDEKALEFANKLYEDLTNLGLEVLLDDRNERFGVKMNDFELMGFPYALVVGKGLEKNEIELIQREGLIKELIKTDELMEILKKKVL</sequence>
<protein>
    <recommendedName>
        <fullName evidence="1">Proline--tRNA ligase</fullName>
        <ecNumber evidence="1">6.1.1.15</ecNumber>
    </recommendedName>
    <alternativeName>
        <fullName evidence="1">Prolyl-tRNA synthetase</fullName>
        <shortName evidence="1">ProRS</shortName>
    </alternativeName>
</protein>
<reference key="1">
    <citation type="journal article" date="2005" name="PLoS Biol.">
        <title>Major structural differences and novel potential virulence mechanisms from the genomes of multiple Campylobacter species.</title>
        <authorList>
            <person name="Fouts D.E."/>
            <person name="Mongodin E.F."/>
            <person name="Mandrell R.E."/>
            <person name="Miller W.G."/>
            <person name="Rasko D.A."/>
            <person name="Ravel J."/>
            <person name="Brinkac L.M."/>
            <person name="DeBoy R.T."/>
            <person name="Parker C.T."/>
            <person name="Daugherty S.C."/>
            <person name="Dodson R.J."/>
            <person name="Durkin A.S."/>
            <person name="Madupu R."/>
            <person name="Sullivan S.A."/>
            <person name="Shetty J.U."/>
            <person name="Ayodeji M.A."/>
            <person name="Shvartsbeyn A."/>
            <person name="Schatz M.C."/>
            <person name="Badger J.H."/>
            <person name="Fraser C.M."/>
            <person name="Nelson K.E."/>
        </authorList>
    </citation>
    <scope>NUCLEOTIDE SEQUENCE [LARGE SCALE GENOMIC DNA]</scope>
    <source>
        <strain>RM1221</strain>
    </source>
</reference>
<comment type="function">
    <text evidence="1">Catalyzes the attachment of proline to tRNA(Pro) in a two-step reaction: proline is first activated by ATP to form Pro-AMP and then transferred to the acceptor end of tRNA(Pro). As ProRS can inadvertently accommodate and process non-cognate amino acids such as alanine and cysteine, to avoid such errors it has two additional distinct editing activities against alanine. One activity is designated as 'pretransfer' editing and involves the tRNA(Pro)-independent hydrolysis of activated Ala-AMP. The other activity is designated 'posttransfer' editing and involves deacylation of mischarged Ala-tRNA(Pro). The misacylated Cys-tRNA(Pro) is not edited by ProRS.</text>
</comment>
<comment type="catalytic activity">
    <reaction evidence="1">
        <text>tRNA(Pro) + L-proline + ATP = L-prolyl-tRNA(Pro) + AMP + diphosphate</text>
        <dbReference type="Rhea" id="RHEA:14305"/>
        <dbReference type="Rhea" id="RHEA-COMP:9700"/>
        <dbReference type="Rhea" id="RHEA-COMP:9702"/>
        <dbReference type="ChEBI" id="CHEBI:30616"/>
        <dbReference type="ChEBI" id="CHEBI:33019"/>
        <dbReference type="ChEBI" id="CHEBI:60039"/>
        <dbReference type="ChEBI" id="CHEBI:78442"/>
        <dbReference type="ChEBI" id="CHEBI:78532"/>
        <dbReference type="ChEBI" id="CHEBI:456215"/>
        <dbReference type="EC" id="6.1.1.15"/>
    </reaction>
</comment>
<comment type="subunit">
    <text evidence="1">Homodimer.</text>
</comment>
<comment type="subcellular location">
    <subcellularLocation>
        <location evidence="1">Cytoplasm</location>
    </subcellularLocation>
</comment>
<comment type="domain">
    <text evidence="1">Consists of three domains: the N-terminal catalytic domain, the editing domain and the C-terminal anticodon-binding domain.</text>
</comment>
<comment type="similarity">
    <text evidence="1">Belongs to the class-II aminoacyl-tRNA synthetase family. ProS type 1 subfamily.</text>
</comment>
<proteinExistence type="inferred from homology"/>
<feature type="chain" id="PRO_0000248664" description="Proline--tRNA ligase">
    <location>
        <begin position="1"/>
        <end position="569"/>
    </location>
</feature>
<keyword id="KW-0030">Aminoacyl-tRNA synthetase</keyword>
<keyword id="KW-0067">ATP-binding</keyword>
<keyword id="KW-0963">Cytoplasm</keyword>
<keyword id="KW-0436">Ligase</keyword>
<keyword id="KW-0547">Nucleotide-binding</keyword>
<keyword id="KW-0648">Protein biosynthesis</keyword>
<evidence type="ECO:0000255" key="1">
    <source>
        <dbReference type="HAMAP-Rule" id="MF_01569"/>
    </source>
</evidence>
<organism>
    <name type="scientific">Campylobacter jejuni (strain RM1221)</name>
    <dbReference type="NCBI Taxonomy" id="195099"/>
    <lineage>
        <taxon>Bacteria</taxon>
        <taxon>Pseudomonadati</taxon>
        <taxon>Campylobacterota</taxon>
        <taxon>Epsilonproteobacteria</taxon>
        <taxon>Campylobacterales</taxon>
        <taxon>Campylobacteraceae</taxon>
        <taxon>Campylobacter</taxon>
    </lineage>
</organism>
<dbReference type="EC" id="6.1.1.15" evidence="1"/>
<dbReference type="EMBL" id="CP000025">
    <property type="protein sequence ID" value="AAW35840.1"/>
    <property type="molecule type" value="Genomic_DNA"/>
</dbReference>
<dbReference type="RefSeq" id="WP_011049735.1">
    <property type="nucleotide sequence ID" value="NC_003912.7"/>
</dbReference>
<dbReference type="SMR" id="Q5HVM3"/>
<dbReference type="KEGG" id="cjr:CJE0647"/>
<dbReference type="HOGENOM" id="CLU_016739_0_0_7"/>
<dbReference type="GO" id="GO:0005829">
    <property type="term" value="C:cytosol"/>
    <property type="evidence" value="ECO:0007669"/>
    <property type="project" value="TreeGrafter"/>
</dbReference>
<dbReference type="GO" id="GO:0002161">
    <property type="term" value="F:aminoacyl-tRNA deacylase activity"/>
    <property type="evidence" value="ECO:0007669"/>
    <property type="project" value="InterPro"/>
</dbReference>
<dbReference type="GO" id="GO:0005524">
    <property type="term" value="F:ATP binding"/>
    <property type="evidence" value="ECO:0007669"/>
    <property type="project" value="UniProtKB-UniRule"/>
</dbReference>
<dbReference type="GO" id="GO:0004827">
    <property type="term" value="F:proline-tRNA ligase activity"/>
    <property type="evidence" value="ECO:0007669"/>
    <property type="project" value="UniProtKB-UniRule"/>
</dbReference>
<dbReference type="GO" id="GO:0006433">
    <property type="term" value="P:prolyl-tRNA aminoacylation"/>
    <property type="evidence" value="ECO:0007669"/>
    <property type="project" value="UniProtKB-UniRule"/>
</dbReference>
<dbReference type="CDD" id="cd04334">
    <property type="entry name" value="ProRS-INS"/>
    <property type="match status" value="1"/>
</dbReference>
<dbReference type="CDD" id="cd00861">
    <property type="entry name" value="ProRS_anticodon_short"/>
    <property type="match status" value="1"/>
</dbReference>
<dbReference type="CDD" id="cd00779">
    <property type="entry name" value="ProRS_core_prok"/>
    <property type="match status" value="1"/>
</dbReference>
<dbReference type="FunFam" id="3.30.930.10:FF:000065">
    <property type="entry name" value="Proline--tRNA ligase"/>
    <property type="match status" value="1"/>
</dbReference>
<dbReference type="FunFam" id="3.30.930.10:FF:000066">
    <property type="entry name" value="Proline--tRNA ligase"/>
    <property type="match status" value="1"/>
</dbReference>
<dbReference type="Gene3D" id="3.40.50.800">
    <property type="entry name" value="Anticodon-binding domain"/>
    <property type="match status" value="1"/>
</dbReference>
<dbReference type="Gene3D" id="3.30.930.10">
    <property type="entry name" value="Bira Bifunctional Protein, Domain 2"/>
    <property type="match status" value="2"/>
</dbReference>
<dbReference type="HAMAP" id="MF_01569">
    <property type="entry name" value="Pro_tRNA_synth_type1"/>
    <property type="match status" value="1"/>
</dbReference>
<dbReference type="InterPro" id="IPR002314">
    <property type="entry name" value="aa-tRNA-synt_IIb"/>
</dbReference>
<dbReference type="InterPro" id="IPR006195">
    <property type="entry name" value="aa-tRNA-synth_II"/>
</dbReference>
<dbReference type="InterPro" id="IPR045864">
    <property type="entry name" value="aa-tRNA-synth_II/BPL/LPL"/>
</dbReference>
<dbReference type="InterPro" id="IPR004154">
    <property type="entry name" value="Anticodon-bd"/>
</dbReference>
<dbReference type="InterPro" id="IPR036621">
    <property type="entry name" value="Anticodon-bd_dom_sf"/>
</dbReference>
<dbReference type="InterPro" id="IPR002316">
    <property type="entry name" value="Pro-tRNA-ligase_IIa"/>
</dbReference>
<dbReference type="InterPro" id="IPR004500">
    <property type="entry name" value="Pro-tRNA-synth_IIa_bac-type"/>
</dbReference>
<dbReference type="InterPro" id="IPR023717">
    <property type="entry name" value="Pro-tRNA-Synthase_IIa_type1"/>
</dbReference>
<dbReference type="InterPro" id="IPR050062">
    <property type="entry name" value="Pro-tRNA_synthetase"/>
</dbReference>
<dbReference type="InterPro" id="IPR044140">
    <property type="entry name" value="ProRS_anticodon_short"/>
</dbReference>
<dbReference type="InterPro" id="IPR033730">
    <property type="entry name" value="ProRS_core_prok"/>
</dbReference>
<dbReference type="InterPro" id="IPR036754">
    <property type="entry name" value="YbaK/aa-tRNA-synt-asso_dom_sf"/>
</dbReference>
<dbReference type="InterPro" id="IPR007214">
    <property type="entry name" value="YbaK/aa-tRNA-synth-assoc-dom"/>
</dbReference>
<dbReference type="NCBIfam" id="NF006625">
    <property type="entry name" value="PRK09194.1"/>
    <property type="match status" value="1"/>
</dbReference>
<dbReference type="NCBIfam" id="TIGR00409">
    <property type="entry name" value="proS_fam_II"/>
    <property type="match status" value="1"/>
</dbReference>
<dbReference type="PANTHER" id="PTHR42753">
    <property type="entry name" value="MITOCHONDRIAL RIBOSOME PROTEIN L39/PROLYL-TRNA LIGASE FAMILY MEMBER"/>
    <property type="match status" value="1"/>
</dbReference>
<dbReference type="PANTHER" id="PTHR42753:SF2">
    <property type="entry name" value="PROLINE--TRNA LIGASE"/>
    <property type="match status" value="1"/>
</dbReference>
<dbReference type="Pfam" id="PF03129">
    <property type="entry name" value="HGTP_anticodon"/>
    <property type="match status" value="1"/>
</dbReference>
<dbReference type="Pfam" id="PF00587">
    <property type="entry name" value="tRNA-synt_2b"/>
    <property type="match status" value="1"/>
</dbReference>
<dbReference type="Pfam" id="PF04073">
    <property type="entry name" value="tRNA_edit"/>
    <property type="match status" value="1"/>
</dbReference>
<dbReference type="PRINTS" id="PR01046">
    <property type="entry name" value="TRNASYNTHPRO"/>
</dbReference>
<dbReference type="SUPFAM" id="SSF52954">
    <property type="entry name" value="Class II aaRS ABD-related"/>
    <property type="match status" value="1"/>
</dbReference>
<dbReference type="SUPFAM" id="SSF55681">
    <property type="entry name" value="Class II aaRS and biotin synthetases"/>
    <property type="match status" value="1"/>
</dbReference>
<dbReference type="SUPFAM" id="SSF55826">
    <property type="entry name" value="YbaK/ProRS associated domain"/>
    <property type="match status" value="1"/>
</dbReference>
<dbReference type="PROSITE" id="PS50862">
    <property type="entry name" value="AA_TRNA_LIGASE_II"/>
    <property type="match status" value="1"/>
</dbReference>
<gene>
    <name evidence="1" type="primary">proS</name>
    <name type="ordered locus">CJE0647</name>
</gene>
<name>SYP_CAMJR</name>